<organism>
    <name type="scientific">Staphylococcus aureus (strain JH9)</name>
    <dbReference type="NCBI Taxonomy" id="359786"/>
    <lineage>
        <taxon>Bacteria</taxon>
        <taxon>Bacillati</taxon>
        <taxon>Bacillota</taxon>
        <taxon>Bacilli</taxon>
        <taxon>Bacillales</taxon>
        <taxon>Staphylococcaceae</taxon>
        <taxon>Staphylococcus</taxon>
    </lineage>
</organism>
<sequence>MKIIHTADWHLGKILNGKQLLEDQAYILDMFVEKMKEEEPDIIVIAGDLYDTTYPSKDAIMLLEQAIGKLNLELRIPIIMISGNHDGKERLNYGASWFEHNQLFIRTDFTSINSPIEINGVNFYTLPYATVSEMKHYFEDDTIETHQQGITRCIETIAPEIDEDAVNILISHLTVQGGKTSDSERPLTIGTVESVQKGVFDIFDYVMLGHLHHPFSIEDDKIKYSGSLLQYSFSEAGQAKGYRRLTINDGIINDVFIPLKPLRQLEIISGEYNDVINEKVHVKNKDNYLHFKLKNMSHITDPMMSLKQIYPNTLALTNETFNYNEENNAIEISEKDDMSIIEMFYKHITDKELSDIQSKKIKNILENELRKED</sequence>
<evidence type="ECO:0000250" key="1"/>
<evidence type="ECO:0000305" key="2"/>
<feature type="chain" id="PRO_0000338481" description="Nuclease SbcCD subunit D">
    <location>
        <begin position="1"/>
        <end position="373"/>
    </location>
</feature>
<comment type="function">
    <text evidence="1">SbcCD cleaves DNA hairpin structures. These structures can inhibit DNA replication and are intermediates in certain DNA recombination reactions. The complex acts as a 3'-&gt;5' double strand exonuclease that can open hairpins. It also has a 5' single-strand endonuclease activity (By similarity).</text>
</comment>
<comment type="subunit">
    <text evidence="1">Heterodimer of SbcC and SbcD.</text>
</comment>
<comment type="similarity">
    <text evidence="2">Belongs to the SbcD family.</text>
</comment>
<protein>
    <recommendedName>
        <fullName>Nuclease SbcCD subunit D</fullName>
    </recommendedName>
</protein>
<accession>A5ISM8</accession>
<name>SBCD_STAA9</name>
<proteinExistence type="inferred from homology"/>
<dbReference type="EMBL" id="CP000703">
    <property type="protein sequence ID" value="ABQ49201.1"/>
    <property type="molecule type" value="Genomic_DNA"/>
</dbReference>
<dbReference type="RefSeq" id="WP_000691301.1">
    <property type="nucleotide sequence ID" value="NC_009487.1"/>
</dbReference>
<dbReference type="SMR" id="A5ISM8"/>
<dbReference type="KEGG" id="saj:SaurJH9_1407"/>
<dbReference type="HOGENOM" id="CLU_038045_0_1_9"/>
<dbReference type="GO" id="GO:0008408">
    <property type="term" value="F:3'-5' exonuclease activity"/>
    <property type="evidence" value="ECO:0007669"/>
    <property type="project" value="InterPro"/>
</dbReference>
<dbReference type="GO" id="GO:0004519">
    <property type="term" value="F:endonuclease activity"/>
    <property type="evidence" value="ECO:0007669"/>
    <property type="project" value="UniProtKB-KW"/>
</dbReference>
<dbReference type="GO" id="GO:0006310">
    <property type="term" value="P:DNA recombination"/>
    <property type="evidence" value="ECO:0007669"/>
    <property type="project" value="UniProtKB-KW"/>
</dbReference>
<dbReference type="GO" id="GO:0006260">
    <property type="term" value="P:DNA replication"/>
    <property type="evidence" value="ECO:0007669"/>
    <property type="project" value="UniProtKB-KW"/>
</dbReference>
<dbReference type="CDD" id="cd00840">
    <property type="entry name" value="MPP_Mre11_N"/>
    <property type="match status" value="1"/>
</dbReference>
<dbReference type="Gene3D" id="3.60.21.10">
    <property type="match status" value="1"/>
</dbReference>
<dbReference type="InterPro" id="IPR004843">
    <property type="entry name" value="Calcineurin-like_PHP_ApaH"/>
</dbReference>
<dbReference type="InterPro" id="IPR050535">
    <property type="entry name" value="DNA_Repair-Maintenance_Comp"/>
</dbReference>
<dbReference type="InterPro" id="IPR029052">
    <property type="entry name" value="Metallo-depent_PP-like"/>
</dbReference>
<dbReference type="InterPro" id="IPR041796">
    <property type="entry name" value="Mre11_N"/>
</dbReference>
<dbReference type="InterPro" id="IPR053381">
    <property type="entry name" value="SbcCD_nuclease"/>
</dbReference>
<dbReference type="InterPro" id="IPR004593">
    <property type="entry name" value="SbcD"/>
</dbReference>
<dbReference type="InterPro" id="IPR026843">
    <property type="entry name" value="SbcD_C"/>
</dbReference>
<dbReference type="NCBIfam" id="TIGR00619">
    <property type="entry name" value="sbcd"/>
    <property type="match status" value="1"/>
</dbReference>
<dbReference type="NCBIfam" id="NF041753">
    <property type="entry name" value="sbcd_Staph"/>
    <property type="match status" value="1"/>
</dbReference>
<dbReference type="PANTHER" id="PTHR30337">
    <property type="entry name" value="COMPONENT OF ATP-DEPENDENT DSDNA EXONUCLEASE"/>
    <property type="match status" value="1"/>
</dbReference>
<dbReference type="PANTHER" id="PTHR30337:SF0">
    <property type="entry name" value="NUCLEASE SBCCD SUBUNIT D"/>
    <property type="match status" value="1"/>
</dbReference>
<dbReference type="Pfam" id="PF00149">
    <property type="entry name" value="Metallophos"/>
    <property type="match status" value="1"/>
</dbReference>
<dbReference type="Pfam" id="PF12320">
    <property type="entry name" value="SbcD_C"/>
    <property type="match status" value="1"/>
</dbReference>
<dbReference type="SUPFAM" id="SSF56300">
    <property type="entry name" value="Metallo-dependent phosphatases"/>
    <property type="match status" value="1"/>
</dbReference>
<reference key="1">
    <citation type="submission" date="2007-05" db="EMBL/GenBank/DDBJ databases">
        <title>Complete sequence of chromosome of Staphylococcus aureus subsp. aureus JH9.</title>
        <authorList>
            <consortium name="US DOE Joint Genome Institute"/>
            <person name="Copeland A."/>
            <person name="Lucas S."/>
            <person name="Lapidus A."/>
            <person name="Barry K."/>
            <person name="Detter J.C."/>
            <person name="Glavina del Rio T."/>
            <person name="Hammon N."/>
            <person name="Israni S."/>
            <person name="Pitluck S."/>
            <person name="Chain P."/>
            <person name="Malfatti S."/>
            <person name="Shin M."/>
            <person name="Vergez L."/>
            <person name="Schmutz J."/>
            <person name="Larimer F."/>
            <person name="Land M."/>
            <person name="Hauser L."/>
            <person name="Kyrpides N."/>
            <person name="Kim E."/>
            <person name="Tomasz A."/>
            <person name="Richardson P."/>
        </authorList>
    </citation>
    <scope>NUCLEOTIDE SEQUENCE [LARGE SCALE GENOMIC DNA]</scope>
    <source>
        <strain>JH9</strain>
    </source>
</reference>
<keyword id="KW-0233">DNA recombination</keyword>
<keyword id="KW-0235">DNA replication</keyword>
<keyword id="KW-0255">Endonuclease</keyword>
<keyword id="KW-0269">Exonuclease</keyword>
<keyword id="KW-0378">Hydrolase</keyword>
<keyword id="KW-0540">Nuclease</keyword>
<gene>
    <name type="primary">sbcD</name>
    <name type="ordered locus">SaurJH9_1407</name>
</gene>